<organism>
    <name type="scientific">Pectobacterium carotovorum subsp. carotovorum (strain PC1)</name>
    <dbReference type="NCBI Taxonomy" id="561230"/>
    <lineage>
        <taxon>Bacteria</taxon>
        <taxon>Pseudomonadati</taxon>
        <taxon>Pseudomonadota</taxon>
        <taxon>Gammaproteobacteria</taxon>
        <taxon>Enterobacterales</taxon>
        <taxon>Pectobacteriaceae</taxon>
        <taxon>Pectobacterium</taxon>
    </lineage>
</organism>
<name>LEUC_PECCP</name>
<proteinExistence type="inferred from homology"/>
<gene>
    <name evidence="1" type="primary">leuC</name>
    <name type="ordered locus">PC1_3609</name>
</gene>
<feature type="chain" id="PRO_1000213330" description="3-isopropylmalate dehydratase large subunit">
    <location>
        <begin position="1"/>
        <end position="466"/>
    </location>
</feature>
<feature type="binding site" evidence="1">
    <location>
        <position position="347"/>
    </location>
    <ligand>
        <name>[4Fe-4S] cluster</name>
        <dbReference type="ChEBI" id="CHEBI:49883"/>
    </ligand>
</feature>
<feature type="binding site" evidence="1">
    <location>
        <position position="407"/>
    </location>
    <ligand>
        <name>[4Fe-4S] cluster</name>
        <dbReference type="ChEBI" id="CHEBI:49883"/>
    </ligand>
</feature>
<feature type="binding site" evidence="1">
    <location>
        <position position="410"/>
    </location>
    <ligand>
        <name>[4Fe-4S] cluster</name>
        <dbReference type="ChEBI" id="CHEBI:49883"/>
    </ligand>
</feature>
<reference key="1">
    <citation type="submission" date="2009-07" db="EMBL/GenBank/DDBJ databases">
        <title>Complete sequence of Pectobacterium carotovorum subsp. carotovorum PC1.</title>
        <authorList>
            <consortium name="US DOE Joint Genome Institute"/>
            <person name="Lucas S."/>
            <person name="Copeland A."/>
            <person name="Lapidus A."/>
            <person name="Glavina del Rio T."/>
            <person name="Tice H."/>
            <person name="Bruce D."/>
            <person name="Goodwin L."/>
            <person name="Pitluck S."/>
            <person name="Munk A.C."/>
            <person name="Brettin T."/>
            <person name="Detter J.C."/>
            <person name="Han C."/>
            <person name="Tapia R."/>
            <person name="Larimer F."/>
            <person name="Land M."/>
            <person name="Hauser L."/>
            <person name="Kyrpides N."/>
            <person name="Mikhailova N."/>
            <person name="Balakrishnan V."/>
            <person name="Glasner J."/>
            <person name="Perna N.T."/>
        </authorList>
    </citation>
    <scope>NUCLEOTIDE SEQUENCE [LARGE SCALE GENOMIC DNA]</scope>
    <source>
        <strain>PC1</strain>
    </source>
</reference>
<protein>
    <recommendedName>
        <fullName evidence="1">3-isopropylmalate dehydratase large subunit</fullName>
        <ecNumber evidence="1">4.2.1.33</ecNumber>
    </recommendedName>
    <alternativeName>
        <fullName evidence="1">Alpha-IPM isomerase</fullName>
        <shortName evidence="1">IPMI</shortName>
    </alternativeName>
    <alternativeName>
        <fullName evidence="1">Isopropylmalate isomerase</fullName>
    </alternativeName>
</protein>
<comment type="function">
    <text evidence="1">Catalyzes the isomerization between 2-isopropylmalate and 3-isopropylmalate, via the formation of 2-isopropylmaleate.</text>
</comment>
<comment type="catalytic activity">
    <reaction evidence="1">
        <text>(2R,3S)-3-isopropylmalate = (2S)-2-isopropylmalate</text>
        <dbReference type="Rhea" id="RHEA:32287"/>
        <dbReference type="ChEBI" id="CHEBI:1178"/>
        <dbReference type="ChEBI" id="CHEBI:35121"/>
        <dbReference type="EC" id="4.2.1.33"/>
    </reaction>
</comment>
<comment type="cofactor">
    <cofactor evidence="1">
        <name>[4Fe-4S] cluster</name>
        <dbReference type="ChEBI" id="CHEBI:49883"/>
    </cofactor>
    <text evidence="1">Binds 1 [4Fe-4S] cluster per subunit.</text>
</comment>
<comment type="pathway">
    <text evidence="1">Amino-acid biosynthesis; L-leucine biosynthesis; L-leucine from 3-methyl-2-oxobutanoate: step 2/4.</text>
</comment>
<comment type="subunit">
    <text evidence="1">Heterodimer of LeuC and LeuD.</text>
</comment>
<comment type="similarity">
    <text evidence="1">Belongs to the aconitase/IPM isomerase family. LeuC type 1 subfamily.</text>
</comment>
<accession>C6DEW0</accession>
<keyword id="KW-0004">4Fe-4S</keyword>
<keyword id="KW-0028">Amino-acid biosynthesis</keyword>
<keyword id="KW-0100">Branched-chain amino acid biosynthesis</keyword>
<keyword id="KW-0408">Iron</keyword>
<keyword id="KW-0411">Iron-sulfur</keyword>
<keyword id="KW-0432">Leucine biosynthesis</keyword>
<keyword id="KW-0456">Lyase</keyword>
<keyword id="KW-0479">Metal-binding</keyword>
<dbReference type="EC" id="4.2.1.33" evidence="1"/>
<dbReference type="EMBL" id="CP001657">
    <property type="protein sequence ID" value="ACT14624.1"/>
    <property type="molecule type" value="Genomic_DNA"/>
</dbReference>
<dbReference type="RefSeq" id="WP_015841740.1">
    <property type="nucleotide sequence ID" value="NC_012917.1"/>
</dbReference>
<dbReference type="SMR" id="C6DEW0"/>
<dbReference type="STRING" id="561230.PC1_3609"/>
<dbReference type="GeneID" id="67792583"/>
<dbReference type="KEGG" id="pct:PC1_3609"/>
<dbReference type="eggNOG" id="COG0065">
    <property type="taxonomic scope" value="Bacteria"/>
</dbReference>
<dbReference type="HOGENOM" id="CLU_006714_3_4_6"/>
<dbReference type="OrthoDB" id="9802769at2"/>
<dbReference type="UniPathway" id="UPA00048">
    <property type="reaction ID" value="UER00071"/>
</dbReference>
<dbReference type="Proteomes" id="UP000002736">
    <property type="component" value="Chromosome"/>
</dbReference>
<dbReference type="GO" id="GO:0003861">
    <property type="term" value="F:3-isopropylmalate dehydratase activity"/>
    <property type="evidence" value="ECO:0007669"/>
    <property type="project" value="UniProtKB-UniRule"/>
</dbReference>
<dbReference type="GO" id="GO:0051539">
    <property type="term" value="F:4 iron, 4 sulfur cluster binding"/>
    <property type="evidence" value="ECO:0007669"/>
    <property type="project" value="UniProtKB-KW"/>
</dbReference>
<dbReference type="GO" id="GO:0046872">
    <property type="term" value="F:metal ion binding"/>
    <property type="evidence" value="ECO:0007669"/>
    <property type="project" value="UniProtKB-KW"/>
</dbReference>
<dbReference type="GO" id="GO:0009098">
    <property type="term" value="P:L-leucine biosynthetic process"/>
    <property type="evidence" value="ECO:0007669"/>
    <property type="project" value="UniProtKB-UniRule"/>
</dbReference>
<dbReference type="CDD" id="cd01583">
    <property type="entry name" value="IPMI"/>
    <property type="match status" value="1"/>
</dbReference>
<dbReference type="FunFam" id="3.30.499.10:FF:000006">
    <property type="entry name" value="3-isopropylmalate dehydratase large subunit"/>
    <property type="match status" value="1"/>
</dbReference>
<dbReference type="FunFam" id="3.30.499.10:FF:000007">
    <property type="entry name" value="3-isopropylmalate dehydratase large subunit"/>
    <property type="match status" value="1"/>
</dbReference>
<dbReference type="Gene3D" id="3.30.499.10">
    <property type="entry name" value="Aconitase, domain 3"/>
    <property type="match status" value="2"/>
</dbReference>
<dbReference type="HAMAP" id="MF_01026">
    <property type="entry name" value="LeuC_type1"/>
    <property type="match status" value="1"/>
</dbReference>
<dbReference type="InterPro" id="IPR004430">
    <property type="entry name" value="3-IsopropMal_deHydase_lsu"/>
</dbReference>
<dbReference type="InterPro" id="IPR015931">
    <property type="entry name" value="Acnase/IPM_dHydase_lsu_aba_1/3"/>
</dbReference>
<dbReference type="InterPro" id="IPR001030">
    <property type="entry name" value="Acoase/IPM_deHydtase_lsu_aba"/>
</dbReference>
<dbReference type="InterPro" id="IPR018136">
    <property type="entry name" value="Aconitase_4Fe-4S_BS"/>
</dbReference>
<dbReference type="InterPro" id="IPR036008">
    <property type="entry name" value="Aconitase_4Fe-4S_dom"/>
</dbReference>
<dbReference type="InterPro" id="IPR050067">
    <property type="entry name" value="IPM_dehydratase_rel_enz"/>
</dbReference>
<dbReference type="InterPro" id="IPR033941">
    <property type="entry name" value="IPMI_cat"/>
</dbReference>
<dbReference type="NCBIfam" id="TIGR00170">
    <property type="entry name" value="leuC"/>
    <property type="match status" value="1"/>
</dbReference>
<dbReference type="NCBIfam" id="NF004016">
    <property type="entry name" value="PRK05478.1"/>
    <property type="match status" value="1"/>
</dbReference>
<dbReference type="NCBIfam" id="NF009116">
    <property type="entry name" value="PRK12466.1"/>
    <property type="match status" value="1"/>
</dbReference>
<dbReference type="PANTHER" id="PTHR43822:SF9">
    <property type="entry name" value="3-ISOPROPYLMALATE DEHYDRATASE"/>
    <property type="match status" value="1"/>
</dbReference>
<dbReference type="PANTHER" id="PTHR43822">
    <property type="entry name" value="HOMOACONITASE, MITOCHONDRIAL-RELATED"/>
    <property type="match status" value="1"/>
</dbReference>
<dbReference type="Pfam" id="PF00330">
    <property type="entry name" value="Aconitase"/>
    <property type="match status" value="1"/>
</dbReference>
<dbReference type="PRINTS" id="PR00415">
    <property type="entry name" value="ACONITASE"/>
</dbReference>
<dbReference type="SUPFAM" id="SSF53732">
    <property type="entry name" value="Aconitase iron-sulfur domain"/>
    <property type="match status" value="1"/>
</dbReference>
<dbReference type="PROSITE" id="PS00450">
    <property type="entry name" value="ACONITASE_1"/>
    <property type="match status" value="1"/>
</dbReference>
<dbReference type="PROSITE" id="PS01244">
    <property type="entry name" value="ACONITASE_2"/>
    <property type="match status" value="1"/>
</dbReference>
<sequence>MGKTLYQKLFEAHVVHEAPNETPLLYIDRHLVHEVTSPQAFDGLRAMGRKVRQPGKTFATMDHNVSTQTKDINASGEMARIQMQELIKNCAEFGVQLYDLNHPYQGIVHVIGPEQGMTLPGMTIVCGDSHTATHGAFGSLAFGIGTSEVEHVLATQTLKQGRAKTMKIEVTGDAPHGITAKDIVLAIIGKTGSAGGTGHVVEFCGKAIRALSMEGRMTLCNMAIEMGAKAGLVAPDETTFNYLKGRQFAPKDANWDAAVAYWNTLKSDDDAQFDTVVTLDAAQIAPQVTWGTNPGQVIAVNQEIPNPDSFSDPVERASAAKALAYMDLQPGIKLTDVKIDKVFIGSCTNSRIEDLRAAAEIAKGRKVAAGVQAIVVPGSGPVKTMAELEGLDKVFIEAGFEWRLPGCSMCLAMNNDRLNPGERCASTSNRNFEGRQGRAGRTHLVSPAMAAAAAVTGRFADVRELN</sequence>
<evidence type="ECO:0000255" key="1">
    <source>
        <dbReference type="HAMAP-Rule" id="MF_01026"/>
    </source>
</evidence>